<evidence type="ECO:0000255" key="1">
    <source>
        <dbReference type="HAMAP-Rule" id="MF_00009"/>
    </source>
</evidence>
<gene>
    <name evidence="1" type="primary">ybeY</name>
    <name type="ordered locus">AM1_1432</name>
</gene>
<name>YBEY_ACAM1</name>
<keyword id="KW-0963">Cytoplasm</keyword>
<keyword id="KW-0255">Endonuclease</keyword>
<keyword id="KW-0378">Hydrolase</keyword>
<keyword id="KW-0479">Metal-binding</keyword>
<keyword id="KW-0540">Nuclease</keyword>
<keyword id="KW-1185">Reference proteome</keyword>
<keyword id="KW-0690">Ribosome biogenesis</keyword>
<keyword id="KW-0698">rRNA processing</keyword>
<keyword id="KW-0862">Zinc</keyword>
<feature type="chain" id="PRO_1000073891" description="Endoribonuclease YbeY">
    <location>
        <begin position="1"/>
        <end position="176"/>
    </location>
</feature>
<feature type="binding site" evidence="1">
    <location>
        <position position="139"/>
    </location>
    <ligand>
        <name>Zn(2+)</name>
        <dbReference type="ChEBI" id="CHEBI:29105"/>
        <note>catalytic</note>
    </ligand>
</feature>
<feature type="binding site" evidence="1">
    <location>
        <position position="143"/>
    </location>
    <ligand>
        <name>Zn(2+)</name>
        <dbReference type="ChEBI" id="CHEBI:29105"/>
        <note>catalytic</note>
    </ligand>
</feature>
<feature type="binding site" evidence="1">
    <location>
        <position position="149"/>
    </location>
    <ligand>
        <name>Zn(2+)</name>
        <dbReference type="ChEBI" id="CHEBI:29105"/>
        <note>catalytic</note>
    </ligand>
</feature>
<comment type="function">
    <text evidence="1">Single strand-specific metallo-endoribonuclease involved in late-stage 70S ribosome quality control and in maturation of the 3' terminus of the 16S rRNA.</text>
</comment>
<comment type="cofactor">
    <cofactor evidence="1">
        <name>Zn(2+)</name>
        <dbReference type="ChEBI" id="CHEBI:29105"/>
    </cofactor>
    <text evidence="1">Binds 1 zinc ion.</text>
</comment>
<comment type="subcellular location">
    <subcellularLocation>
        <location evidence="1">Cytoplasm</location>
    </subcellularLocation>
</comment>
<comment type="similarity">
    <text evidence="1">Belongs to the endoribonuclease YbeY family.</text>
</comment>
<proteinExistence type="inferred from homology"/>
<protein>
    <recommendedName>
        <fullName evidence="1">Endoribonuclease YbeY</fullName>
        <ecNumber evidence="1">3.1.-.-</ecNumber>
    </recommendedName>
</protein>
<accession>B0C7R9</accession>
<reference key="1">
    <citation type="journal article" date="2008" name="Proc. Natl. Acad. Sci. U.S.A.">
        <title>Niche adaptation and genome expansion in the chlorophyll d-producing cyanobacterium Acaryochloris marina.</title>
        <authorList>
            <person name="Swingley W.D."/>
            <person name="Chen M."/>
            <person name="Cheung P.C."/>
            <person name="Conrad A.L."/>
            <person name="Dejesa L.C."/>
            <person name="Hao J."/>
            <person name="Honchak B.M."/>
            <person name="Karbach L.E."/>
            <person name="Kurdoglu A."/>
            <person name="Lahiri S."/>
            <person name="Mastrian S.D."/>
            <person name="Miyashita H."/>
            <person name="Page L."/>
            <person name="Ramakrishna P."/>
            <person name="Satoh S."/>
            <person name="Sattley W.M."/>
            <person name="Shimada Y."/>
            <person name="Taylor H.L."/>
            <person name="Tomo T."/>
            <person name="Tsuchiya T."/>
            <person name="Wang Z.T."/>
            <person name="Raymond J."/>
            <person name="Mimuro M."/>
            <person name="Blankenship R.E."/>
            <person name="Touchman J.W."/>
        </authorList>
    </citation>
    <scope>NUCLEOTIDE SEQUENCE [LARGE SCALE GENOMIC DNA]</scope>
    <source>
        <strain>MBIC 11017</strain>
    </source>
</reference>
<dbReference type="EC" id="3.1.-.-" evidence="1"/>
<dbReference type="EMBL" id="CP000828">
    <property type="protein sequence ID" value="ABW26460.1"/>
    <property type="molecule type" value="Genomic_DNA"/>
</dbReference>
<dbReference type="RefSeq" id="WP_012161991.1">
    <property type="nucleotide sequence ID" value="NC_009925.1"/>
</dbReference>
<dbReference type="SMR" id="B0C7R9"/>
<dbReference type="STRING" id="329726.AM1_1432"/>
<dbReference type="KEGG" id="amr:AM1_1432"/>
<dbReference type="eggNOG" id="COG0319">
    <property type="taxonomic scope" value="Bacteria"/>
</dbReference>
<dbReference type="HOGENOM" id="CLU_106710_3_0_3"/>
<dbReference type="OrthoDB" id="9807740at2"/>
<dbReference type="Proteomes" id="UP000000268">
    <property type="component" value="Chromosome"/>
</dbReference>
<dbReference type="GO" id="GO:0005737">
    <property type="term" value="C:cytoplasm"/>
    <property type="evidence" value="ECO:0007669"/>
    <property type="project" value="UniProtKB-SubCell"/>
</dbReference>
<dbReference type="GO" id="GO:0004222">
    <property type="term" value="F:metalloendopeptidase activity"/>
    <property type="evidence" value="ECO:0007669"/>
    <property type="project" value="InterPro"/>
</dbReference>
<dbReference type="GO" id="GO:0004521">
    <property type="term" value="F:RNA endonuclease activity"/>
    <property type="evidence" value="ECO:0007669"/>
    <property type="project" value="UniProtKB-UniRule"/>
</dbReference>
<dbReference type="GO" id="GO:0008270">
    <property type="term" value="F:zinc ion binding"/>
    <property type="evidence" value="ECO:0007669"/>
    <property type="project" value="UniProtKB-UniRule"/>
</dbReference>
<dbReference type="GO" id="GO:0006364">
    <property type="term" value="P:rRNA processing"/>
    <property type="evidence" value="ECO:0007669"/>
    <property type="project" value="UniProtKB-UniRule"/>
</dbReference>
<dbReference type="Gene3D" id="3.40.390.30">
    <property type="entry name" value="Metalloproteases ('zincins'), catalytic domain"/>
    <property type="match status" value="1"/>
</dbReference>
<dbReference type="HAMAP" id="MF_00009">
    <property type="entry name" value="Endoribonucl_YbeY"/>
    <property type="match status" value="1"/>
</dbReference>
<dbReference type="InterPro" id="IPR023091">
    <property type="entry name" value="MetalPrtase_cat_dom_sf_prd"/>
</dbReference>
<dbReference type="InterPro" id="IPR002036">
    <property type="entry name" value="YbeY"/>
</dbReference>
<dbReference type="InterPro" id="IPR020549">
    <property type="entry name" value="YbeY_CS"/>
</dbReference>
<dbReference type="NCBIfam" id="TIGR00043">
    <property type="entry name" value="rRNA maturation RNase YbeY"/>
    <property type="match status" value="1"/>
</dbReference>
<dbReference type="PANTHER" id="PTHR46986">
    <property type="entry name" value="ENDORIBONUCLEASE YBEY, CHLOROPLASTIC"/>
    <property type="match status" value="1"/>
</dbReference>
<dbReference type="PANTHER" id="PTHR46986:SF1">
    <property type="entry name" value="ENDORIBONUCLEASE YBEY, CHLOROPLASTIC"/>
    <property type="match status" value="1"/>
</dbReference>
<dbReference type="Pfam" id="PF02130">
    <property type="entry name" value="YbeY"/>
    <property type="match status" value="1"/>
</dbReference>
<dbReference type="SUPFAM" id="SSF55486">
    <property type="entry name" value="Metalloproteases ('zincins'), catalytic domain"/>
    <property type="match status" value="1"/>
</dbReference>
<dbReference type="PROSITE" id="PS01306">
    <property type="entry name" value="UPF0054"/>
    <property type="match status" value="1"/>
</dbReference>
<organism>
    <name type="scientific">Acaryochloris marina (strain MBIC 11017)</name>
    <dbReference type="NCBI Taxonomy" id="329726"/>
    <lineage>
        <taxon>Bacteria</taxon>
        <taxon>Bacillati</taxon>
        <taxon>Cyanobacteriota</taxon>
        <taxon>Cyanophyceae</taxon>
        <taxon>Acaryochloridales</taxon>
        <taxon>Acaryochloridaceae</taxon>
        <taxon>Acaryochloris</taxon>
    </lineage>
</organism>
<sequence>MQVDVHIQWDLEDRAIPSSLVENVLKQAHQITAVTWQSWFQHWFEHLQPSISPIQTYELSLLLTDDAAIQNLNATYRHLDRPTDVLAFATLDLTEQPTDLWSEMPVELGDIIISVETAAQQAQEQQHPLPQELAWLATHGLLHLLGWDHPTPERLQDMLAQQQLLINLTNVSAATS</sequence>